<feature type="chain" id="PRO_0000379217" description="ATP-dependent helicase/deoxyribonuclease subunit B">
    <location>
        <begin position="1"/>
        <end position="1158"/>
    </location>
</feature>
<feature type="domain" description="UvrD-like helicase ATP-binding" evidence="1">
    <location>
        <begin position="1"/>
        <end position="275"/>
    </location>
</feature>
<feature type="domain" description="UvrD-like helicase C-terminal" evidence="1">
    <location>
        <begin position="269"/>
        <end position="583"/>
    </location>
</feature>
<feature type="binding site" evidence="1">
    <location>
        <begin position="8"/>
        <end position="15"/>
    </location>
    <ligand>
        <name>ATP</name>
        <dbReference type="ChEBI" id="CHEBI:30616"/>
    </ligand>
</feature>
<feature type="binding site" evidence="1">
    <location>
        <position position="784"/>
    </location>
    <ligand>
        <name>[4Fe-4S] cluster</name>
        <dbReference type="ChEBI" id="CHEBI:49883"/>
    </ligand>
</feature>
<feature type="binding site" evidence="1">
    <location>
        <position position="1112"/>
    </location>
    <ligand>
        <name>[4Fe-4S] cluster</name>
        <dbReference type="ChEBI" id="CHEBI:49883"/>
    </ligand>
</feature>
<feature type="binding site" evidence="1">
    <location>
        <position position="1115"/>
    </location>
    <ligand>
        <name>[4Fe-4S] cluster</name>
        <dbReference type="ChEBI" id="CHEBI:49883"/>
    </ligand>
</feature>
<feature type="binding site" evidence="1">
    <location>
        <position position="1121"/>
    </location>
    <ligand>
        <name>[4Fe-4S] cluster</name>
        <dbReference type="ChEBI" id="CHEBI:49883"/>
    </ligand>
</feature>
<comment type="function">
    <text evidence="1">The heterodimer acts as both an ATP-dependent DNA helicase and an ATP-dependent, dual-direction single-stranded exonuclease. Recognizes the chi site generating a DNA molecule suitable for the initiation of homologous recombination. The AddB subunit has 5' -&gt; 3' nuclease activity but not helicase activity.</text>
</comment>
<comment type="cofactor">
    <cofactor evidence="1">
        <name>Mg(2+)</name>
        <dbReference type="ChEBI" id="CHEBI:18420"/>
    </cofactor>
</comment>
<comment type="cofactor">
    <cofactor evidence="1">
        <name>[4Fe-4S] cluster</name>
        <dbReference type="ChEBI" id="CHEBI:49883"/>
    </cofactor>
    <text evidence="1">Binds 1 [4Fe-4S] cluster.</text>
</comment>
<comment type="subunit">
    <text evidence="1">Heterodimer of AddA and AddB.</text>
</comment>
<comment type="miscellaneous">
    <text evidence="1">Despite having conserved helicase domains, this subunit does not have helicase activity.</text>
</comment>
<comment type="similarity">
    <text evidence="1">Belongs to the helicase family. AddB/RexB type 1 subfamily.</text>
</comment>
<reference key="1">
    <citation type="journal article" date="2006" name="Lancet">
        <title>Complete genome sequence of USA300, an epidemic clone of community-acquired meticillin-resistant Staphylococcus aureus.</title>
        <authorList>
            <person name="Diep B.A."/>
            <person name="Gill S.R."/>
            <person name="Chang R.F."/>
            <person name="Phan T.H."/>
            <person name="Chen J.H."/>
            <person name="Davidson M.G."/>
            <person name="Lin F."/>
            <person name="Lin J."/>
            <person name="Carleton H.A."/>
            <person name="Mongodin E.F."/>
            <person name="Sensabaugh G.F."/>
            <person name="Perdreau-Remington F."/>
        </authorList>
    </citation>
    <scope>NUCLEOTIDE SEQUENCE [LARGE SCALE GENOMIC DNA]</scope>
    <source>
        <strain>USA300</strain>
    </source>
</reference>
<accession>Q2FIA9</accession>
<dbReference type="EC" id="3.1.-.-" evidence="1"/>
<dbReference type="EMBL" id="CP000255">
    <property type="protein sequence ID" value="ABD22422.1"/>
    <property type="molecule type" value="Genomic_DNA"/>
</dbReference>
<dbReference type="RefSeq" id="WP_000172342.1">
    <property type="nucleotide sequence ID" value="NZ_CP027476.1"/>
</dbReference>
<dbReference type="SMR" id="Q2FIA9"/>
<dbReference type="KEGG" id="saa:SAUSA300_0869"/>
<dbReference type="HOGENOM" id="CLU_007838_0_0_9"/>
<dbReference type="OMA" id="IVPNHIK"/>
<dbReference type="Proteomes" id="UP000001939">
    <property type="component" value="Chromosome"/>
</dbReference>
<dbReference type="GO" id="GO:0051539">
    <property type="term" value="F:4 iron, 4 sulfur cluster binding"/>
    <property type="evidence" value="ECO:0007669"/>
    <property type="project" value="UniProtKB-KW"/>
</dbReference>
<dbReference type="GO" id="GO:0008409">
    <property type="term" value="F:5'-3' exonuclease activity"/>
    <property type="evidence" value="ECO:0007669"/>
    <property type="project" value="UniProtKB-UniRule"/>
</dbReference>
<dbReference type="GO" id="GO:0005524">
    <property type="term" value="F:ATP binding"/>
    <property type="evidence" value="ECO:0007669"/>
    <property type="project" value="UniProtKB-UniRule"/>
</dbReference>
<dbReference type="GO" id="GO:0003690">
    <property type="term" value="F:double-stranded DNA binding"/>
    <property type="evidence" value="ECO:0007669"/>
    <property type="project" value="UniProtKB-UniRule"/>
</dbReference>
<dbReference type="GO" id="GO:0004386">
    <property type="term" value="F:helicase activity"/>
    <property type="evidence" value="ECO:0007669"/>
    <property type="project" value="UniProtKB-KW"/>
</dbReference>
<dbReference type="GO" id="GO:0046872">
    <property type="term" value="F:metal ion binding"/>
    <property type="evidence" value="ECO:0007669"/>
    <property type="project" value="UniProtKB-KW"/>
</dbReference>
<dbReference type="GO" id="GO:0000724">
    <property type="term" value="P:double-strand break repair via homologous recombination"/>
    <property type="evidence" value="ECO:0007669"/>
    <property type="project" value="UniProtKB-UniRule"/>
</dbReference>
<dbReference type="Gene3D" id="3.90.320.10">
    <property type="match status" value="1"/>
</dbReference>
<dbReference type="Gene3D" id="3.40.50.300">
    <property type="entry name" value="P-loop containing nucleotide triphosphate hydrolases"/>
    <property type="match status" value="4"/>
</dbReference>
<dbReference type="HAMAP" id="MF_01452">
    <property type="entry name" value="AddB_type1"/>
    <property type="match status" value="1"/>
</dbReference>
<dbReference type="InterPro" id="IPR049035">
    <property type="entry name" value="ADDB_N"/>
</dbReference>
<dbReference type="InterPro" id="IPR014140">
    <property type="entry name" value="DNA_helicase_suAddB"/>
</dbReference>
<dbReference type="InterPro" id="IPR014017">
    <property type="entry name" value="DNA_helicase_UvrD-like_C"/>
</dbReference>
<dbReference type="InterPro" id="IPR027417">
    <property type="entry name" value="P-loop_NTPase"/>
</dbReference>
<dbReference type="InterPro" id="IPR011604">
    <property type="entry name" value="PDDEXK-like_dom_sf"/>
</dbReference>
<dbReference type="InterPro" id="IPR038726">
    <property type="entry name" value="PDDEXK_AddAB-type"/>
</dbReference>
<dbReference type="NCBIfam" id="TIGR02773">
    <property type="entry name" value="addB_Gpos"/>
    <property type="match status" value="1"/>
</dbReference>
<dbReference type="PANTHER" id="PTHR30591">
    <property type="entry name" value="RECBCD ENZYME SUBUNIT RECC"/>
    <property type="match status" value="1"/>
</dbReference>
<dbReference type="PANTHER" id="PTHR30591:SF1">
    <property type="entry name" value="RECBCD ENZYME SUBUNIT RECC"/>
    <property type="match status" value="1"/>
</dbReference>
<dbReference type="Pfam" id="PF21445">
    <property type="entry name" value="ADDB_N"/>
    <property type="match status" value="1"/>
</dbReference>
<dbReference type="Pfam" id="PF12705">
    <property type="entry name" value="PDDEXK_1"/>
    <property type="match status" value="1"/>
</dbReference>
<dbReference type="SUPFAM" id="SSF52540">
    <property type="entry name" value="P-loop containing nucleoside triphosphate hydrolases"/>
    <property type="match status" value="1"/>
</dbReference>
<dbReference type="PROSITE" id="PS51198">
    <property type="entry name" value="UVRD_HELICASE_ATP_BIND"/>
    <property type="match status" value="1"/>
</dbReference>
<dbReference type="PROSITE" id="PS51217">
    <property type="entry name" value="UVRD_HELICASE_CTER"/>
    <property type="match status" value="1"/>
</dbReference>
<proteinExistence type="inferred from homology"/>
<name>ADDB_STAA3</name>
<protein>
    <recommendedName>
        <fullName evidence="1">ATP-dependent helicase/deoxyribonuclease subunit B</fullName>
        <ecNumber evidence="1">3.1.-.-</ecNumber>
    </recommendedName>
    <alternativeName>
        <fullName evidence="1">ATP-dependent helicase/nuclease subunit AddB</fullName>
    </alternativeName>
</protein>
<gene>
    <name evidence="1" type="primary">addB</name>
    <name type="synonym">rexB</name>
    <name type="ordered locus">SAUSA300_0869</name>
</gene>
<keyword id="KW-0004">4Fe-4S</keyword>
<keyword id="KW-0067">ATP-binding</keyword>
<keyword id="KW-0227">DNA damage</keyword>
<keyword id="KW-0234">DNA repair</keyword>
<keyword id="KW-0238">DNA-binding</keyword>
<keyword id="KW-0269">Exonuclease</keyword>
<keyword id="KW-0347">Helicase</keyword>
<keyword id="KW-0378">Hydrolase</keyword>
<keyword id="KW-0408">Iron</keyword>
<keyword id="KW-0411">Iron-sulfur</keyword>
<keyword id="KW-0479">Metal-binding</keyword>
<keyword id="KW-0540">Nuclease</keyword>
<keyword id="KW-0547">Nucleotide-binding</keyword>
<organism>
    <name type="scientific">Staphylococcus aureus (strain USA300)</name>
    <dbReference type="NCBI Taxonomy" id="367830"/>
    <lineage>
        <taxon>Bacteria</taxon>
        <taxon>Bacillati</taxon>
        <taxon>Bacillota</taxon>
        <taxon>Bacilli</taxon>
        <taxon>Bacillales</taxon>
        <taxon>Staphylococcaceae</taxon>
        <taxon>Staphylococcus</taxon>
    </lineage>
</organism>
<evidence type="ECO:0000255" key="1">
    <source>
        <dbReference type="HAMAP-Rule" id="MF_01452"/>
    </source>
</evidence>
<sequence length="1158" mass="134505">MTLHAYLGRAGTGKSTKMLTEIKQKMKADPLGDPIILIAPTQSTFQLEQAFVNDPELNGSLRTEVLHFERLSHRIFQEVGSYSEQKLSKAATEMMIYNIVQEQQKYLKLYQSQAKYYGFSEKLTEQIQDFKKYAVTPEHLEHFIADKNMQTRTKNKLEDIALIYREFEQRIQNEFITGEDSLQYFIDCMPKSEWLKRADIYIDGFHNFSTIEYLIIKGLIKYAKSVTIILTTDGNHDQFSLFRKPSEVLRHIEEIANELNISIERQYFNQLYRFNNQDLKHLEQEFDALQINRVACQGHINILESATMREEINEIARRIIVDIRDKQLRYQDIAILYRDESYAYLFDSILPLYNIPYNIDTKRSMTHHPVMEMIRSLIEVIQSNWQVNPMLRLLKTDVLTASYLKSAYLVDLLENFVLERGIYGKRWLDDELFNVEHFSKMGRKAHKLTEDERNTFEQVVKLKKDVIDKILHFEKQMSQAETVKDFATAFYESMEYFELPNQLMTERDELDLNGNHEKAEEIDQIWNGLIQILDDLVLVFGDEPMSMERFLEVFDIGLEQLEFVMIPQTLDQVSIGTMDLAKVDNKQHVYLVGMNDGTMPQPVTASSLITDEEKKYFEQQANVELSPTSDILQMDEAFVCYVAMTRAKGDVTFSYSLMGSSGDDKEISPFLNQIQSLFNQLEITNIPQYHEVNPLSLMQHAKQTKITLFEALRAWLYDEIVADSWLDAYQVIRDSDHLNQGLDYLMSALTFDNETVKLGETLSKDLYGKEINASVSRFEGYQQCPFKHYASHGLKLNERTKYELQNFDLGDIFHSVLKYISERINGDFKQLDLKKIRQLTNEALEEILPKVQFNLLNSSAYYRYLSRRIGAIVETTLSALKYQGTYSKFMPKHFETSFRRKPRTNDELIAQTLTTTQGIPINIRGQIDRIDTYTKNDTSFVNIIDYKSSEGSATLDLTKVYYGMQMQMMTYMDIVLQNKQRLGLTDIVKPGGLLYFHVHEPRIKFKSWSDIDEDKLEQDLIKKFKLSGLVNADQTVIDALDIRLEPKFTSDIVPVGLNKDGSLSKRGSQVADEATIYKFIQHNKENFIETASNIMDGHTEVAPLKYKQKLPCAFCSYQSVCHVDGMIDSKRYRTVDETINPIEAIQNININDEFGGEQ</sequence>